<sequence>MSKDFSRTQRVSQQLQKELAMILQREVRDSRLGMVTISDVEVSRDLAYAKVFVTFLCVGEQTPESCLAALREHEVHIRMMLGKRIRLRLTPEVRFYYDNTLVEGMRMSNLVTEVVNKDKIKQKDAGREDEE</sequence>
<evidence type="ECO:0000255" key="1">
    <source>
        <dbReference type="HAMAP-Rule" id="MF_00003"/>
    </source>
</evidence>
<evidence type="ECO:0000305" key="2"/>
<reference key="1">
    <citation type="journal article" date="2003" name="Genome Res.">
        <title>Comparative genome analysis of Vibrio vulnificus, a marine pathogen.</title>
        <authorList>
            <person name="Chen C.-Y."/>
            <person name="Wu K.-M."/>
            <person name="Chang Y.-C."/>
            <person name="Chang C.-H."/>
            <person name="Tsai H.-C."/>
            <person name="Liao T.-L."/>
            <person name="Liu Y.-M."/>
            <person name="Chen H.-J."/>
            <person name="Shen A.B.-T."/>
            <person name="Li J.-C."/>
            <person name="Su T.-L."/>
            <person name="Shao C.-P."/>
            <person name="Lee C.-T."/>
            <person name="Hor L.-I."/>
            <person name="Tsai S.-F."/>
        </authorList>
    </citation>
    <scope>NUCLEOTIDE SEQUENCE [LARGE SCALE GENOMIC DNA]</scope>
    <source>
        <strain>YJ016</strain>
    </source>
</reference>
<gene>
    <name evidence="1" type="primary">rbfA</name>
    <name type="ordered locus">VV2707</name>
</gene>
<accession>Q7MI10</accession>
<dbReference type="EMBL" id="BA000037">
    <property type="protein sequence ID" value="BAC95471.1"/>
    <property type="status" value="ALT_INIT"/>
    <property type="molecule type" value="Genomic_DNA"/>
</dbReference>
<dbReference type="RefSeq" id="WP_011079617.1">
    <property type="nucleotide sequence ID" value="NC_005139.1"/>
</dbReference>
<dbReference type="SMR" id="Q7MI10"/>
<dbReference type="STRING" id="672.VV93_v1c24240"/>
<dbReference type="GeneID" id="93895950"/>
<dbReference type="KEGG" id="vvy:VV2707"/>
<dbReference type="eggNOG" id="COG0858">
    <property type="taxonomic scope" value="Bacteria"/>
</dbReference>
<dbReference type="HOGENOM" id="CLU_089475_5_2_6"/>
<dbReference type="Proteomes" id="UP000002675">
    <property type="component" value="Chromosome I"/>
</dbReference>
<dbReference type="GO" id="GO:0005829">
    <property type="term" value="C:cytosol"/>
    <property type="evidence" value="ECO:0007669"/>
    <property type="project" value="TreeGrafter"/>
</dbReference>
<dbReference type="GO" id="GO:0043024">
    <property type="term" value="F:ribosomal small subunit binding"/>
    <property type="evidence" value="ECO:0007669"/>
    <property type="project" value="TreeGrafter"/>
</dbReference>
<dbReference type="GO" id="GO:0030490">
    <property type="term" value="P:maturation of SSU-rRNA"/>
    <property type="evidence" value="ECO:0007669"/>
    <property type="project" value="UniProtKB-UniRule"/>
</dbReference>
<dbReference type="FunFam" id="3.30.300.20:FF:000007">
    <property type="entry name" value="Ribosome-binding factor A"/>
    <property type="match status" value="1"/>
</dbReference>
<dbReference type="Gene3D" id="3.30.300.20">
    <property type="match status" value="1"/>
</dbReference>
<dbReference type="HAMAP" id="MF_00003">
    <property type="entry name" value="RbfA"/>
    <property type="match status" value="1"/>
</dbReference>
<dbReference type="InterPro" id="IPR015946">
    <property type="entry name" value="KH_dom-like_a/b"/>
</dbReference>
<dbReference type="InterPro" id="IPR000238">
    <property type="entry name" value="RbfA"/>
</dbReference>
<dbReference type="InterPro" id="IPR023799">
    <property type="entry name" value="RbfA_dom_sf"/>
</dbReference>
<dbReference type="InterPro" id="IPR020053">
    <property type="entry name" value="Ribosome-bd_factorA_CS"/>
</dbReference>
<dbReference type="NCBIfam" id="TIGR00082">
    <property type="entry name" value="rbfA"/>
    <property type="match status" value="1"/>
</dbReference>
<dbReference type="PANTHER" id="PTHR33515">
    <property type="entry name" value="RIBOSOME-BINDING FACTOR A, CHLOROPLASTIC-RELATED"/>
    <property type="match status" value="1"/>
</dbReference>
<dbReference type="PANTHER" id="PTHR33515:SF1">
    <property type="entry name" value="RIBOSOME-BINDING FACTOR A, CHLOROPLASTIC-RELATED"/>
    <property type="match status" value="1"/>
</dbReference>
<dbReference type="Pfam" id="PF02033">
    <property type="entry name" value="RBFA"/>
    <property type="match status" value="1"/>
</dbReference>
<dbReference type="SUPFAM" id="SSF89919">
    <property type="entry name" value="Ribosome-binding factor A, RbfA"/>
    <property type="match status" value="1"/>
</dbReference>
<dbReference type="PROSITE" id="PS01319">
    <property type="entry name" value="RBFA"/>
    <property type="match status" value="1"/>
</dbReference>
<proteinExistence type="inferred from homology"/>
<name>RBFA_VIBVY</name>
<keyword id="KW-0963">Cytoplasm</keyword>
<keyword id="KW-0690">Ribosome biogenesis</keyword>
<organism>
    <name type="scientific">Vibrio vulnificus (strain YJ016)</name>
    <dbReference type="NCBI Taxonomy" id="196600"/>
    <lineage>
        <taxon>Bacteria</taxon>
        <taxon>Pseudomonadati</taxon>
        <taxon>Pseudomonadota</taxon>
        <taxon>Gammaproteobacteria</taxon>
        <taxon>Vibrionales</taxon>
        <taxon>Vibrionaceae</taxon>
        <taxon>Vibrio</taxon>
    </lineage>
</organism>
<comment type="function">
    <text evidence="1">One of several proteins that assist in the late maturation steps of the functional core of the 30S ribosomal subunit. Associates with free 30S ribosomal subunits (but not with 30S subunits that are part of 70S ribosomes or polysomes). Required for efficient processing of 16S rRNA. May interact with the 5'-terminal helix region of 16S rRNA.</text>
</comment>
<comment type="subunit">
    <text evidence="1">Monomer. Binds 30S ribosomal subunits, but not 50S ribosomal subunits or 70S ribosomes.</text>
</comment>
<comment type="subcellular location">
    <subcellularLocation>
        <location evidence="1">Cytoplasm</location>
    </subcellularLocation>
</comment>
<comment type="similarity">
    <text evidence="1">Belongs to the RbfA family.</text>
</comment>
<comment type="sequence caution" evidence="2">
    <conflict type="erroneous initiation">
        <sequence resource="EMBL-CDS" id="BAC95471"/>
    </conflict>
    <text>Extended N-terminus.</text>
</comment>
<protein>
    <recommendedName>
        <fullName evidence="1">Ribosome-binding factor A</fullName>
    </recommendedName>
</protein>
<feature type="chain" id="PRO_0000102769" description="Ribosome-binding factor A">
    <location>
        <begin position="1"/>
        <end position="131"/>
    </location>
</feature>